<protein>
    <recommendedName>
        <fullName>Cytochrome b</fullName>
    </recommendedName>
    <alternativeName>
        <fullName>Complex III subunit 3</fullName>
    </alternativeName>
    <alternativeName>
        <fullName>Complex III subunit III</fullName>
    </alternativeName>
    <alternativeName>
        <fullName>Cytochrome b-c1 complex subunit 3</fullName>
    </alternativeName>
    <alternativeName>
        <fullName>Ubiquinol-cytochrome-c reductase complex cytochrome b subunit</fullName>
    </alternativeName>
</protein>
<dbReference type="EMBL" id="AF157946">
    <property type="protein sequence ID" value="AAD50230.1"/>
    <property type="molecule type" value="Genomic_DNA"/>
</dbReference>
<dbReference type="EMBL" id="AF157947">
    <property type="protein sequence ID" value="AAD50231.1"/>
    <property type="molecule type" value="Genomic_DNA"/>
</dbReference>
<dbReference type="SMR" id="Q9TF12"/>
<dbReference type="GO" id="GO:0005743">
    <property type="term" value="C:mitochondrial inner membrane"/>
    <property type="evidence" value="ECO:0007669"/>
    <property type="project" value="UniProtKB-SubCell"/>
</dbReference>
<dbReference type="GO" id="GO:0045275">
    <property type="term" value="C:respiratory chain complex III"/>
    <property type="evidence" value="ECO:0007669"/>
    <property type="project" value="InterPro"/>
</dbReference>
<dbReference type="GO" id="GO:0046872">
    <property type="term" value="F:metal ion binding"/>
    <property type="evidence" value="ECO:0007669"/>
    <property type="project" value="UniProtKB-KW"/>
</dbReference>
<dbReference type="GO" id="GO:0008121">
    <property type="term" value="F:ubiquinol-cytochrome-c reductase activity"/>
    <property type="evidence" value="ECO:0007669"/>
    <property type="project" value="InterPro"/>
</dbReference>
<dbReference type="GO" id="GO:0006122">
    <property type="term" value="P:mitochondrial electron transport, ubiquinol to cytochrome c"/>
    <property type="evidence" value="ECO:0007669"/>
    <property type="project" value="TreeGrafter"/>
</dbReference>
<dbReference type="CDD" id="cd00290">
    <property type="entry name" value="cytochrome_b_C"/>
    <property type="match status" value="1"/>
</dbReference>
<dbReference type="CDD" id="cd00284">
    <property type="entry name" value="Cytochrome_b_N"/>
    <property type="match status" value="1"/>
</dbReference>
<dbReference type="FunFam" id="1.20.810.10:FF:000002">
    <property type="entry name" value="Cytochrome b"/>
    <property type="match status" value="1"/>
</dbReference>
<dbReference type="Gene3D" id="1.20.810.10">
    <property type="entry name" value="Cytochrome Bc1 Complex, Chain C"/>
    <property type="match status" value="1"/>
</dbReference>
<dbReference type="InterPro" id="IPR005798">
    <property type="entry name" value="Cyt_b/b6_C"/>
</dbReference>
<dbReference type="InterPro" id="IPR036150">
    <property type="entry name" value="Cyt_b/b6_C_sf"/>
</dbReference>
<dbReference type="InterPro" id="IPR005797">
    <property type="entry name" value="Cyt_b/b6_N"/>
</dbReference>
<dbReference type="InterPro" id="IPR027387">
    <property type="entry name" value="Cytb/b6-like_sf"/>
</dbReference>
<dbReference type="InterPro" id="IPR030689">
    <property type="entry name" value="Cytochrome_b"/>
</dbReference>
<dbReference type="InterPro" id="IPR048260">
    <property type="entry name" value="Cytochrome_b_C_euk/bac"/>
</dbReference>
<dbReference type="InterPro" id="IPR048259">
    <property type="entry name" value="Cytochrome_b_N_euk/bac"/>
</dbReference>
<dbReference type="InterPro" id="IPR016174">
    <property type="entry name" value="Di-haem_cyt_TM"/>
</dbReference>
<dbReference type="PANTHER" id="PTHR19271">
    <property type="entry name" value="CYTOCHROME B"/>
    <property type="match status" value="1"/>
</dbReference>
<dbReference type="PANTHER" id="PTHR19271:SF16">
    <property type="entry name" value="CYTOCHROME B"/>
    <property type="match status" value="1"/>
</dbReference>
<dbReference type="Pfam" id="PF00032">
    <property type="entry name" value="Cytochrom_B_C"/>
    <property type="match status" value="1"/>
</dbReference>
<dbReference type="Pfam" id="PF00033">
    <property type="entry name" value="Cytochrome_B"/>
    <property type="match status" value="1"/>
</dbReference>
<dbReference type="PIRSF" id="PIRSF038885">
    <property type="entry name" value="COB"/>
    <property type="match status" value="1"/>
</dbReference>
<dbReference type="SUPFAM" id="SSF81648">
    <property type="entry name" value="a domain/subunit of cytochrome bc1 complex (Ubiquinol-cytochrome c reductase)"/>
    <property type="match status" value="1"/>
</dbReference>
<dbReference type="SUPFAM" id="SSF81342">
    <property type="entry name" value="Transmembrane di-heme cytochromes"/>
    <property type="match status" value="1"/>
</dbReference>
<dbReference type="PROSITE" id="PS51003">
    <property type="entry name" value="CYTB_CTER"/>
    <property type="match status" value="1"/>
</dbReference>
<dbReference type="PROSITE" id="PS51002">
    <property type="entry name" value="CYTB_NTER"/>
    <property type="match status" value="1"/>
</dbReference>
<name>CYB_CALMG</name>
<keyword id="KW-0249">Electron transport</keyword>
<keyword id="KW-0349">Heme</keyword>
<keyword id="KW-0408">Iron</keyword>
<keyword id="KW-0472">Membrane</keyword>
<keyword id="KW-0479">Metal-binding</keyword>
<keyword id="KW-0496">Mitochondrion</keyword>
<keyword id="KW-0999">Mitochondrion inner membrane</keyword>
<keyword id="KW-0679">Respiratory chain</keyword>
<keyword id="KW-0812">Transmembrane</keyword>
<keyword id="KW-1133">Transmembrane helix</keyword>
<keyword id="KW-0813">Transport</keyword>
<keyword id="KW-0830">Ubiquinone</keyword>
<reference key="1">
    <citation type="journal article" date="2003" name="J. Mammal. Evol.">
        <title>Phylogeny and evolutionary history of the ground squirrels (Rodentia: Marmotinae).</title>
        <authorList>
            <person name="Harrison R.G."/>
            <person name="Bogdanowicz S.M."/>
            <person name="Hoffmann R.S."/>
            <person name="Yensen E."/>
            <person name="Sherman P.W."/>
        </authorList>
    </citation>
    <scope>NUCLEOTIDE SEQUENCE [GENOMIC DNA]</scope>
    <source>
        <strain>Isolate S97</strain>
        <strain>Isolate S98</strain>
    </source>
</reference>
<sequence>MTNIRKTHPLIKIINYSFIDLPTPSNISTWWNFGSLLGLCLTIQILTGLFLAMHYTSDTMTAFSSVTHICRDVNYGWLIRYMHANGASMFFICLFIHVGRGSYYGSYSYFETWNIGVILLFMVMATAFMGYVLPWGQMSFWGATVITNLLSAIPYIGTTLVEWIWGGFSVDKATLTRFFAFHFILPFIITALVTVHLLFLHETGSNNPSGLISDSDKIPFHPYYTIKDILGAFLLIMVLMTLVLFSPDLLGDPDNYTPANPLSTPPHIKPEWYFLFAYAILRSIPNKLGGVLALVFSILILMLFPLLHLAKQRSMMFRPLSQCMFWILVADLLTLTWIGGQPVEYPFTIIGQLASIMYFTIILLVLPTVNLIENKLLKW</sequence>
<evidence type="ECO:0000250" key="1"/>
<evidence type="ECO:0000250" key="2">
    <source>
        <dbReference type="UniProtKB" id="P00157"/>
    </source>
</evidence>
<evidence type="ECO:0000255" key="3">
    <source>
        <dbReference type="PROSITE-ProRule" id="PRU00967"/>
    </source>
</evidence>
<evidence type="ECO:0000255" key="4">
    <source>
        <dbReference type="PROSITE-ProRule" id="PRU00968"/>
    </source>
</evidence>
<accession>Q9TF12</accession>
<accession>Q9TF11</accession>
<organism>
    <name type="scientific">Callospermophilus madrensis</name>
    <name type="common">Sierra Madre ground squirrel</name>
    <name type="synonym">Spermophilus madrensis</name>
    <dbReference type="NCBI Taxonomy" id="99842"/>
    <lineage>
        <taxon>Eukaryota</taxon>
        <taxon>Metazoa</taxon>
        <taxon>Chordata</taxon>
        <taxon>Craniata</taxon>
        <taxon>Vertebrata</taxon>
        <taxon>Euteleostomi</taxon>
        <taxon>Mammalia</taxon>
        <taxon>Eutheria</taxon>
        <taxon>Euarchontoglires</taxon>
        <taxon>Glires</taxon>
        <taxon>Rodentia</taxon>
        <taxon>Sciuromorpha</taxon>
        <taxon>Sciuridae</taxon>
        <taxon>Xerinae</taxon>
        <taxon>Marmotini</taxon>
        <taxon>Callospermophilus</taxon>
    </lineage>
</organism>
<comment type="function">
    <text evidence="2">Component of the ubiquinol-cytochrome c reductase complex (complex III or cytochrome b-c1 complex) that is part of the mitochondrial respiratory chain. The b-c1 complex mediates electron transfer from ubiquinol to cytochrome c. Contributes to the generation of a proton gradient across the mitochondrial membrane that is then used for ATP synthesis.</text>
</comment>
<comment type="cofactor">
    <cofactor evidence="2">
        <name>heme b</name>
        <dbReference type="ChEBI" id="CHEBI:60344"/>
    </cofactor>
    <text evidence="2">Binds 2 heme b groups non-covalently.</text>
</comment>
<comment type="subunit">
    <text evidence="2">The cytochrome bc1 complex contains 11 subunits: 3 respiratory subunits (MT-CYB, CYC1 and UQCRFS1), 2 core proteins (UQCRC1 and UQCRC2) and 6 low-molecular weight proteins (UQCRH/QCR6, UQCRB/QCR7, UQCRQ/QCR8, UQCR10/QCR9, UQCR11/QCR10 and a cleavage product of UQCRFS1). This cytochrome bc1 complex then forms a dimer.</text>
</comment>
<comment type="subcellular location">
    <subcellularLocation>
        <location evidence="2">Mitochondrion inner membrane</location>
        <topology evidence="2">Multi-pass membrane protein</topology>
    </subcellularLocation>
</comment>
<comment type="miscellaneous">
    <text evidence="1">Heme 1 (or BL or b562) is low-potential and absorbs at about 562 nm, and heme 2 (or BH or b566) is high-potential and absorbs at about 566 nm.</text>
</comment>
<comment type="similarity">
    <text evidence="3 4">Belongs to the cytochrome b family.</text>
</comment>
<comment type="caution">
    <text evidence="2">The full-length protein contains only eight transmembrane helices, not nine as predicted by bioinformatics tools.</text>
</comment>
<geneLocation type="mitochondrion"/>
<proteinExistence type="inferred from homology"/>
<feature type="chain" id="PRO_0000255138" description="Cytochrome b">
    <location>
        <begin position="1"/>
        <end position="379"/>
    </location>
</feature>
<feature type="transmembrane region" description="Helical" evidence="2">
    <location>
        <begin position="33"/>
        <end position="53"/>
    </location>
</feature>
<feature type="transmembrane region" description="Helical" evidence="2">
    <location>
        <begin position="77"/>
        <end position="98"/>
    </location>
</feature>
<feature type="transmembrane region" description="Helical" evidence="2">
    <location>
        <begin position="113"/>
        <end position="133"/>
    </location>
</feature>
<feature type="transmembrane region" description="Helical" evidence="2">
    <location>
        <begin position="178"/>
        <end position="198"/>
    </location>
</feature>
<feature type="transmembrane region" description="Helical" evidence="2">
    <location>
        <begin position="226"/>
        <end position="246"/>
    </location>
</feature>
<feature type="transmembrane region" description="Helical" evidence="2">
    <location>
        <begin position="288"/>
        <end position="308"/>
    </location>
</feature>
<feature type="transmembrane region" description="Helical" evidence="2">
    <location>
        <begin position="320"/>
        <end position="340"/>
    </location>
</feature>
<feature type="transmembrane region" description="Helical" evidence="2">
    <location>
        <begin position="347"/>
        <end position="367"/>
    </location>
</feature>
<feature type="binding site" description="axial binding residue" evidence="2">
    <location>
        <position position="83"/>
    </location>
    <ligand>
        <name>heme b</name>
        <dbReference type="ChEBI" id="CHEBI:60344"/>
        <label>b562</label>
    </ligand>
    <ligandPart>
        <name>Fe</name>
        <dbReference type="ChEBI" id="CHEBI:18248"/>
    </ligandPart>
</feature>
<feature type="binding site" description="axial binding residue" evidence="2">
    <location>
        <position position="97"/>
    </location>
    <ligand>
        <name>heme b</name>
        <dbReference type="ChEBI" id="CHEBI:60344"/>
        <label>b566</label>
    </ligand>
    <ligandPart>
        <name>Fe</name>
        <dbReference type="ChEBI" id="CHEBI:18248"/>
    </ligandPart>
</feature>
<feature type="binding site" description="axial binding residue" evidence="2">
    <location>
        <position position="182"/>
    </location>
    <ligand>
        <name>heme b</name>
        <dbReference type="ChEBI" id="CHEBI:60344"/>
        <label>b562</label>
    </ligand>
    <ligandPart>
        <name>Fe</name>
        <dbReference type="ChEBI" id="CHEBI:18248"/>
    </ligandPart>
</feature>
<feature type="binding site" description="axial binding residue" evidence="2">
    <location>
        <position position="196"/>
    </location>
    <ligand>
        <name>heme b</name>
        <dbReference type="ChEBI" id="CHEBI:60344"/>
        <label>b566</label>
    </ligand>
    <ligandPart>
        <name>Fe</name>
        <dbReference type="ChEBI" id="CHEBI:18248"/>
    </ligandPart>
</feature>
<feature type="binding site" evidence="2">
    <location>
        <position position="201"/>
    </location>
    <ligand>
        <name>a ubiquinone</name>
        <dbReference type="ChEBI" id="CHEBI:16389"/>
    </ligand>
</feature>
<feature type="sequence variant" description="In strain: Isolate S98.">
    <original>L</original>
    <variation>F</variation>
    <location>
        <position position="239"/>
    </location>
</feature>
<feature type="sequence variant" description="In strain: Isolate S98.">
    <original>M</original>
    <variation>T</variation>
    <location>
        <position position="324"/>
    </location>
</feature>
<gene>
    <name type="primary">MT-CYB</name>
    <name type="synonym">COB</name>
    <name type="synonym">CYTB</name>
    <name type="synonym">MTCYB</name>
</gene>